<organism>
    <name type="scientific">Mus musculus</name>
    <name type="common">Mouse</name>
    <dbReference type="NCBI Taxonomy" id="10090"/>
    <lineage>
        <taxon>Eukaryota</taxon>
        <taxon>Metazoa</taxon>
        <taxon>Chordata</taxon>
        <taxon>Craniata</taxon>
        <taxon>Vertebrata</taxon>
        <taxon>Euteleostomi</taxon>
        <taxon>Mammalia</taxon>
        <taxon>Eutheria</taxon>
        <taxon>Euarchontoglires</taxon>
        <taxon>Glires</taxon>
        <taxon>Rodentia</taxon>
        <taxon>Myomorpha</taxon>
        <taxon>Muroidea</taxon>
        <taxon>Muridae</taxon>
        <taxon>Murinae</taxon>
        <taxon>Mus</taxon>
        <taxon>Mus</taxon>
    </lineage>
</organism>
<feature type="chain" id="PRO_0000067078" description="pre-mRNA splicing regulator USH1G">
    <location>
        <begin position="1"/>
        <end position="461"/>
    </location>
</feature>
<feature type="repeat" description="ANK 1">
    <location>
        <begin position="31"/>
        <end position="60"/>
    </location>
</feature>
<feature type="repeat" description="ANK 2">
    <location>
        <begin position="64"/>
        <end position="93"/>
    </location>
</feature>
<feature type="repeat" description="ANK 3">
    <location>
        <begin position="97"/>
        <end position="126"/>
    </location>
</feature>
<feature type="domain" description="SAM">
    <location>
        <begin position="385"/>
        <end position="447"/>
    </location>
</feature>
<feature type="region of interest" description="Disordered" evidence="2">
    <location>
        <begin position="329"/>
        <end position="368"/>
    </location>
</feature>
<feature type="modified residue" description="Phosphoserine" evidence="1">
    <location>
        <position position="422"/>
    </location>
</feature>
<feature type="sequence conflict" description="In Ref. 1; BAC57426." evidence="9" ref="1">
    <original>L</original>
    <variation>F</variation>
    <location>
        <position position="176"/>
    </location>
</feature>
<accession>Q80T11</accession>
<accession>Q80UG0</accession>
<comment type="function">
    <text evidence="1 5 6">Plays a role in pre-mRNA splicing by regulating the release and transfer of U4/U6.U5 tri-small nuclear ribonucleoprotein (tri-snRNP) complexes from their assembly site in Cajal bodies to nuclear speckles, thereby contributing to the assembly of the pre-catalytic spliceosome on target pre-mRNAs (By similarity). May also participate in recycling of snRNPs back to Cajal bodies during splicing (By similarity). Plays a role in regulating MAGI2-mediated endocytosis (By similarity). Anchoring/scaffolding protein that is a part of the functional network formed by USH1C, USH1G, CDH23 and MYO7A that mediates mechanotransduction in cochlear hair cells. Required for normal development and maintenance of cochlear hair cell bundles. Required for normal hearing.</text>
</comment>
<comment type="subunit">
    <text evidence="1 4 5 7">Part of a complex composed of USH1C, USH1G and MYO7A (By similarity). Interacts with USH1C (via the first PDZ domain) (PubMed:12588794). Interacts with PDZD7 (By similarity). Interacts with CDH23 and PCDH15; these interactions may recruit USH1G to the plasma membrane (PubMed:21436032). Interacts with intraflagellar transport proteins IFT20, IFT52 and IFT57 (By similarity). Interacts with splicing factors SF3B1, PRPF6, PRPF31 and SON (By similarity). Interacts with the U4/U6.U5 tri-small nuclear ribonucleoprotein (tri-snRNP) complex in the presence of pre-mRNAs (By similarity). Interacts (via SAM domain) with MAGI2 (via PDZ 6 domain); the interaction is triggered by phosphorylation of USH1G by CK2 and negatively regulates MAGI2-mediated endocytosis (PubMed:24608321).</text>
</comment>
<comment type="interaction">
    <interactant intactId="EBI-7418889">
        <id>Q80T11</id>
    </interactant>
    <interactant intactId="EBI-1149557">
        <id>P97479</id>
        <label>Myo7a</label>
    </interactant>
    <organismsDiffer>false</organismsDiffer>
    <experiments>4</experiments>
</comment>
<comment type="interaction">
    <interactant intactId="EBI-7418889">
        <id>Q80T11</id>
    </interactant>
    <interactant intactId="EBI-7418919">
        <id>Q9ES64-3</id>
        <label>Ush1c</label>
    </interactant>
    <organismsDiffer>false</organismsDiffer>
    <experiments>3</experiments>
</comment>
<comment type="subcellular location">
    <subcellularLocation>
        <location>Cytoplasm</location>
        <location>Cytosol</location>
    </subcellularLocation>
    <subcellularLocation>
        <location>Cytoplasm</location>
        <location>Cytoskeleton</location>
    </subcellularLocation>
    <subcellularLocation>
        <location evidence="5">Cell membrane</location>
        <topology evidence="9">Peripheral membrane protein</topology>
    </subcellularLocation>
    <subcellularLocation>
        <location evidence="7 8">Cell projection</location>
        <location evidence="7 8">Cilium</location>
    </subcellularLocation>
    <subcellularLocation>
        <location evidence="1">Nucleus speckle</location>
    </subcellularLocation>
    <subcellularLocation>
        <location evidence="1">Nucleus</location>
        <location evidence="1">Cajal body</location>
    </subcellularLocation>
    <subcellularLocation>
        <location evidence="7">Cytoplasm</location>
        <location evidence="7">Cytoskeleton</location>
        <location evidence="7">Microtubule organizing center</location>
        <location evidence="7">Centrosome</location>
    </subcellularLocation>
    <subcellularLocation>
        <location evidence="7">Photoreceptor inner segment</location>
    </subcellularLocation>
    <text evidence="5 7 8">Detected at the tip of cochlear hair cell stereocilia. Recruited to the cell membrane via interaction with CDH23 or PCDH15 (PubMed:21436032). In photoreceptor cilia, detected predominantly at the cilium base (PubMed:31637240). Expressed in the pericentriolar region of the centrosome (PubMed:24608321).</text>
</comment>
<comment type="tissue specificity">
    <text evidence="3 5 6 8">Detected in stereocilia from cochlear hair cells (at protein level). Detected in retinal photoreceptor cell cilia (at protein level) (PubMed:31637240). Highly expressed in the cochlea, testis, cerebellum and eye, and low levels in brain, thymus and spleen. Significant signals detected in the neurosensory epithelium of inner ear cochlea and saccule, especially in inner and outer hair cells.</text>
</comment>
<comment type="developmental stage">
    <text>Low-level expression detected in 17.5 dpc embryos but not in embryos earlier than 15.5 dpc.</text>
</comment>
<comment type="disease">
    <text evidence="3 4 5">Defects in Ush1g are the cause of the Jackson shaker phenotypes (js). Jackson shaker mice carry recessive mutations predicted to inactivate Ush1g by frameshift resulting in a truncated protein lacking the C-terminal SAM domain. The js phenotype is characterized by deafness, abnormal behavior (circling and/or head-tossing) and degeneration of inner ear neuroepithelia. Defects in the formation of protein complex including Ush1g may disrupt stereocilia bundle in js mice.</text>
</comment>
<comment type="disruption phenotype">
    <text evidence="5 8">Mice are deaf, due to defects in hair cell bundles in the cochlea (PubMed:21436032). They develop circling behavior, probably due to balance problems (PubMed:21436032). Reduced expression of Ift20, Ift52 and Ift57 in the ciliary region of photoreceptor cells (PubMed:31637240).</text>
</comment>
<evidence type="ECO:0000250" key="1">
    <source>
        <dbReference type="UniProtKB" id="Q495M9"/>
    </source>
</evidence>
<evidence type="ECO:0000256" key="2">
    <source>
        <dbReference type="SAM" id="MobiDB-lite"/>
    </source>
</evidence>
<evidence type="ECO:0000269" key="3">
    <source>
    </source>
</evidence>
<evidence type="ECO:0000269" key="4">
    <source>
    </source>
</evidence>
<evidence type="ECO:0000269" key="5">
    <source>
    </source>
</evidence>
<evidence type="ECO:0000269" key="6">
    <source>
    </source>
</evidence>
<evidence type="ECO:0000269" key="7">
    <source>
    </source>
</evidence>
<evidence type="ECO:0000269" key="8">
    <source>
    </source>
</evidence>
<evidence type="ECO:0000305" key="9"/>
<keyword id="KW-0040">ANK repeat</keyword>
<keyword id="KW-1003">Cell membrane</keyword>
<keyword id="KW-0966">Cell projection</keyword>
<keyword id="KW-0963">Cytoplasm</keyword>
<keyword id="KW-0206">Cytoskeleton</keyword>
<keyword id="KW-0209">Deafness</keyword>
<keyword id="KW-1009">Hearing</keyword>
<keyword id="KW-0472">Membrane</keyword>
<keyword id="KW-0539">Nucleus</keyword>
<keyword id="KW-0597">Phosphoprotein</keyword>
<keyword id="KW-1185">Reference proteome</keyword>
<keyword id="KW-0677">Repeat</keyword>
<sequence length="461" mass="51490">MNDQYHRAARDGYLELLKEATRKELNAPDEDGMTPTLWAAYHGNLESLRLIVSRGGDPDKCDIWGNTPLHLAASNGHLHCLSFLVSFGANIWCLDNDYHTPLDMAAMKGHMECVRYLDSIAAKQSSLNPKLVGKLKDKAFREAERRIRECAKMQRKHHERMERRYRRELAERSDTLSFSSLTSSTLSRRLQHMTLGSQLPYSQATLHGTAKGKAKIQKKLERRKQGGEGTFKVSEDGRKSVRSLSGLQLGSDVMFVRQGTYANPKEWGRAPLRDMFLSDEDSVSRATLAAEPAHSEVSTDSGHDSLFTRPGLGTMVFRRNYVSSGLHGLGREDGGLDGAGTPRGRLHSSPSLDDDSLGSANSLQDRSCGEELPWDELDLGLDEDLEPETSPLETFLASLHMEDFASLLRHEKIDLEALMLCSDLDLRSISVPLGPRKKILGAVRRRRQALERPLALEDTEL</sequence>
<gene>
    <name type="primary">Ush1g</name>
    <name type="synonym">Sans</name>
</gene>
<reference key="1">
    <citation type="journal article" date="2003" name="Hum. Mol. Genet.">
        <title>Mutations in a new scaffold protein Sans cause deafness in Jackson shaker mice.</title>
        <authorList>
            <person name="Kikkawa Y."/>
            <person name="Shitara H."/>
            <person name="Wakana S."/>
            <person name="Kohara Y."/>
            <person name="Takada T."/>
            <person name="Okamoto M."/>
            <person name="Taya C."/>
            <person name="Kamiya K."/>
            <person name="Yoshikawa Y."/>
            <person name="Tokano H."/>
            <person name="Kitamura K."/>
            <person name="Shimizu K."/>
            <person name="Wakabayashi Y."/>
            <person name="Shiroishi T."/>
            <person name="Kominami R."/>
            <person name="Yonekawa H."/>
        </authorList>
    </citation>
    <scope>NUCLEOTIDE SEQUENCE [GENOMIC DNA / MRNA]</scope>
    <scope>TISSUE SPECIFICITY</scope>
    <scope>POSSIBLE FUNCTION</scope>
</reference>
<reference key="2">
    <citation type="journal article" date="2003" name="Hum. Mol. Genet.">
        <title>Usher syndrome type I G (USH1G) is caused by mutations in the gene encoding SANS, a protein that associates with the USH1C protein, harmonin.</title>
        <authorList>
            <person name="Weil D."/>
            <person name="El-Amraoui A."/>
            <person name="Masmoudi S."/>
            <person name="Mustapha M."/>
            <person name="Kikkawa Y."/>
            <person name="Laine S."/>
            <person name="Delmaghani S."/>
            <person name="Adato A."/>
            <person name="Nadifi S."/>
            <person name="Zina Z.B."/>
            <person name="Hamel C."/>
            <person name="Gal A."/>
            <person name="Ayadi H."/>
            <person name="Yonekawa H."/>
            <person name="Petit C."/>
        </authorList>
    </citation>
    <scope>INTERACTION WITH USH1C</scope>
    <scope>POSSIBLE FUNCTION</scope>
</reference>
<reference key="3">
    <citation type="journal article" date="2011" name="Proc. Natl. Acad. Sci. U.S.A.">
        <title>Usher type 1G protein sans is a critical component of the tip-link complex, a structure controlling actin polymerization in stereocilia.</title>
        <authorList>
            <person name="Caberlotto E."/>
            <person name="Michel V."/>
            <person name="Foucher I."/>
            <person name="Bahloul A."/>
            <person name="Goodyear R.J."/>
            <person name="Pepermans E."/>
            <person name="Michalski N."/>
            <person name="Perfettini I."/>
            <person name="Alegria-Prevot O."/>
            <person name="Chardenoux S."/>
            <person name="Do Cruzeiro M."/>
            <person name="Hardelin J.P."/>
            <person name="Richardson G.P."/>
            <person name="Avan P."/>
            <person name="Weil D."/>
            <person name="Petit C."/>
        </authorList>
    </citation>
    <scope>FUNCTION</scope>
    <scope>DISRUPTION PHENOTYPE</scope>
    <scope>TISSUE SPECIFICITY</scope>
    <scope>SUBCELLULAR LOCATION</scope>
    <scope>INTERACTION WITH CDH23 AND PCDH15</scope>
</reference>
<reference key="4">
    <citation type="journal article" date="2011" name="Proc. Natl. Acad. Sci. U.S.A.">
        <title>Myosin VIIa and sans localization at stereocilia upper tip-link density implicates these Usher syndrome proteins in mechanotransduction.</title>
        <authorList>
            <person name="Grati M."/>
            <person name="Kachar B."/>
        </authorList>
    </citation>
    <scope>FUNCTION</scope>
    <scope>TISSUE SPECIFICITY</scope>
    <scope>SUBCELLULAR LOCATION</scope>
</reference>
<reference key="5">
    <citation type="journal article" date="2014" name="Hum. Mol. Genet.">
        <title>Phosphorylation of the Usher syndrome 1G protein SANS controls Magi2-mediated endocytosis.</title>
        <authorList>
            <person name="Bauss K."/>
            <person name="Knapp B."/>
            <person name="Jores P."/>
            <person name="Roepman R."/>
            <person name="Kremer H."/>
            <person name="Wijk E.V."/>
            <person name="Maerker T."/>
            <person name="Wolfrum U."/>
        </authorList>
    </citation>
    <scope>INTERACTION WITH MAGI2</scope>
    <scope>SUBCELLULAR LOCATION</scope>
</reference>
<reference key="6">
    <citation type="journal article" date="2019" name="Front. Cell Dev. Biol.">
        <title>SANS (USH1G) Molecularly Links the Human Usher Syndrome Protein Network to the Intraflagellar Transport Module by Direct Binding to IFT-B Proteins.</title>
        <authorList>
            <person name="Sorusch N."/>
            <person name="Yildirim A."/>
            <person name="Knapp B."/>
            <person name="Janson J."/>
            <person name="Fleck W."/>
            <person name="Scharf C."/>
            <person name="Wolfrum U."/>
        </authorList>
    </citation>
    <scope>SUBCELLULAR LOCATION</scope>
    <scope>TISSUE SPECIFICITY</scope>
    <scope>DISRUPTION PHENOTYPE</scope>
</reference>
<dbReference type="EMBL" id="AB087502">
    <property type="protein sequence ID" value="BAC57430.1"/>
    <property type="molecule type" value="mRNA"/>
</dbReference>
<dbReference type="EMBL" id="AB087501">
    <property type="protein sequence ID" value="BAC57426.1"/>
    <property type="molecule type" value="Genomic_DNA"/>
</dbReference>
<dbReference type="CCDS" id="CCDS25627.1"/>
<dbReference type="RefSeq" id="NP_789817.1">
    <property type="nucleotide sequence ID" value="NM_176847.3"/>
</dbReference>
<dbReference type="SMR" id="Q80T11"/>
<dbReference type="BioGRID" id="200868">
    <property type="interactions" value="1"/>
</dbReference>
<dbReference type="FunCoup" id="Q80T11">
    <property type="interactions" value="93"/>
</dbReference>
<dbReference type="IntAct" id="Q80T11">
    <property type="interactions" value="2"/>
</dbReference>
<dbReference type="MINT" id="Q80T11"/>
<dbReference type="STRING" id="10090.ENSMUSP00000099326"/>
<dbReference type="iPTMnet" id="Q80T11"/>
<dbReference type="PhosphoSitePlus" id="Q80T11"/>
<dbReference type="PaxDb" id="10090-ENSMUSP00000099326"/>
<dbReference type="Antibodypedia" id="19482">
    <property type="antibodies" value="49 antibodies from 17 providers"/>
</dbReference>
<dbReference type="Ensembl" id="ENSMUST00000103037.5">
    <property type="protein sequence ID" value="ENSMUSP00000099326.5"/>
    <property type="gene ID" value="ENSMUSG00000045288.11"/>
</dbReference>
<dbReference type="GeneID" id="16470"/>
<dbReference type="KEGG" id="mmu:16470"/>
<dbReference type="UCSC" id="uc007mhc.1">
    <property type="organism name" value="mouse"/>
</dbReference>
<dbReference type="AGR" id="MGI:2450757"/>
<dbReference type="CTD" id="124590"/>
<dbReference type="MGI" id="MGI:2450757">
    <property type="gene designation" value="Ush1g"/>
</dbReference>
<dbReference type="VEuPathDB" id="HostDB:ENSMUSG00000045288"/>
<dbReference type="eggNOG" id="KOG0504">
    <property type="taxonomic scope" value="Eukaryota"/>
</dbReference>
<dbReference type="GeneTree" id="ENSGT00390000017548"/>
<dbReference type="HOGENOM" id="CLU_028071_0_0_1"/>
<dbReference type="InParanoid" id="Q80T11"/>
<dbReference type="OMA" id="VMYVGTF"/>
<dbReference type="OrthoDB" id="76949at2759"/>
<dbReference type="PhylomeDB" id="Q80T11"/>
<dbReference type="TreeFam" id="TF324946"/>
<dbReference type="BioGRID-ORCS" id="16470">
    <property type="hits" value="4 hits in 77 CRISPR screens"/>
</dbReference>
<dbReference type="PRO" id="PR:Q80T11"/>
<dbReference type="Proteomes" id="UP000000589">
    <property type="component" value="Chromosome 11"/>
</dbReference>
<dbReference type="RNAct" id="Q80T11">
    <property type="molecule type" value="protein"/>
</dbReference>
<dbReference type="Bgee" id="ENSMUSG00000045288">
    <property type="expression patterns" value="Expressed in olfactory bulb and 21 other cell types or tissues"/>
</dbReference>
<dbReference type="ExpressionAtlas" id="Q80T11">
    <property type="expression patterns" value="baseline and differential"/>
</dbReference>
<dbReference type="GO" id="GO:0015629">
    <property type="term" value="C:actin cytoskeleton"/>
    <property type="evidence" value="ECO:0000314"/>
    <property type="project" value="HGNC-UCL"/>
</dbReference>
<dbReference type="GO" id="GO:0015030">
    <property type="term" value="C:Cajal body"/>
    <property type="evidence" value="ECO:0000250"/>
    <property type="project" value="UniProtKB"/>
</dbReference>
<dbReference type="GO" id="GO:0005813">
    <property type="term" value="C:centrosome"/>
    <property type="evidence" value="ECO:0007669"/>
    <property type="project" value="UniProtKB-SubCell"/>
</dbReference>
<dbReference type="GO" id="GO:0036064">
    <property type="term" value="C:ciliary basal body"/>
    <property type="evidence" value="ECO:0000314"/>
    <property type="project" value="MGI"/>
</dbReference>
<dbReference type="GO" id="GO:0097546">
    <property type="term" value="C:ciliary base"/>
    <property type="evidence" value="ECO:0000250"/>
    <property type="project" value="UniProtKB"/>
</dbReference>
<dbReference type="GO" id="GO:0005737">
    <property type="term" value="C:cytoplasm"/>
    <property type="evidence" value="ECO:0000314"/>
    <property type="project" value="MGI"/>
</dbReference>
<dbReference type="GO" id="GO:0005829">
    <property type="term" value="C:cytosol"/>
    <property type="evidence" value="ECO:0000304"/>
    <property type="project" value="Reactome"/>
</dbReference>
<dbReference type="GO" id="GO:0016020">
    <property type="term" value="C:membrane"/>
    <property type="evidence" value="ECO:0000250"/>
    <property type="project" value="MGI"/>
</dbReference>
<dbReference type="GO" id="GO:0016607">
    <property type="term" value="C:nuclear speck"/>
    <property type="evidence" value="ECO:0000250"/>
    <property type="project" value="UniProtKB"/>
</dbReference>
<dbReference type="GO" id="GO:0032391">
    <property type="term" value="C:photoreceptor connecting cilium"/>
    <property type="evidence" value="ECO:0000314"/>
    <property type="project" value="MGI"/>
</dbReference>
<dbReference type="GO" id="GO:0001917">
    <property type="term" value="C:photoreceptor inner segment"/>
    <property type="evidence" value="ECO:0000314"/>
    <property type="project" value="MGI"/>
</dbReference>
<dbReference type="GO" id="GO:0005886">
    <property type="term" value="C:plasma membrane"/>
    <property type="evidence" value="ECO:0007669"/>
    <property type="project" value="UniProtKB-SubCell"/>
</dbReference>
<dbReference type="GO" id="GO:0042802">
    <property type="term" value="F:identical protein binding"/>
    <property type="evidence" value="ECO:0000353"/>
    <property type="project" value="MGI"/>
</dbReference>
<dbReference type="GO" id="GO:0030507">
    <property type="term" value="F:spectrin binding"/>
    <property type="evidence" value="ECO:0000266"/>
    <property type="project" value="MGI"/>
</dbReference>
<dbReference type="GO" id="GO:0050957">
    <property type="term" value="P:equilibrioception"/>
    <property type="evidence" value="ECO:0007669"/>
    <property type="project" value="Ensembl"/>
</dbReference>
<dbReference type="GO" id="GO:0042472">
    <property type="term" value="P:inner ear morphogenesis"/>
    <property type="evidence" value="ECO:0000315"/>
    <property type="project" value="MGI"/>
</dbReference>
<dbReference type="GO" id="GO:0060113">
    <property type="term" value="P:inner ear receptor cell differentiation"/>
    <property type="evidence" value="ECO:0000315"/>
    <property type="project" value="MGI"/>
</dbReference>
<dbReference type="GO" id="GO:0060122">
    <property type="term" value="P:inner ear receptor cell stereocilium organization"/>
    <property type="evidence" value="ECO:0000315"/>
    <property type="project" value="MGI"/>
</dbReference>
<dbReference type="GO" id="GO:0045494">
    <property type="term" value="P:photoreceptor cell maintenance"/>
    <property type="evidence" value="ECO:0007669"/>
    <property type="project" value="Ensembl"/>
</dbReference>
<dbReference type="GO" id="GO:2000369">
    <property type="term" value="P:regulation of clathrin-dependent endocytosis"/>
    <property type="evidence" value="ECO:0000250"/>
    <property type="project" value="UniProtKB"/>
</dbReference>
<dbReference type="GO" id="GO:0050953">
    <property type="term" value="P:sensory perception of light stimulus"/>
    <property type="evidence" value="ECO:0007669"/>
    <property type="project" value="Ensembl"/>
</dbReference>
<dbReference type="GO" id="GO:0007605">
    <property type="term" value="P:sensory perception of sound"/>
    <property type="evidence" value="ECO:0000315"/>
    <property type="project" value="MGI"/>
</dbReference>
<dbReference type="CDD" id="cd21803">
    <property type="entry name" value="CEN_USH1G"/>
    <property type="match status" value="1"/>
</dbReference>
<dbReference type="CDD" id="cd09586">
    <property type="entry name" value="SAM_USH1G"/>
    <property type="match status" value="1"/>
</dbReference>
<dbReference type="FunFam" id="1.10.150.50:FF:000034">
    <property type="entry name" value="ankyrin repeat and SAM domain-containing protein 4B"/>
    <property type="match status" value="1"/>
</dbReference>
<dbReference type="FunFam" id="1.25.40.20:FF:000074">
    <property type="entry name" value="Usher syndrome type-1G protein isoform X1"/>
    <property type="match status" value="1"/>
</dbReference>
<dbReference type="Gene3D" id="1.25.40.20">
    <property type="entry name" value="Ankyrin repeat-containing domain"/>
    <property type="match status" value="1"/>
</dbReference>
<dbReference type="Gene3D" id="1.10.150.50">
    <property type="entry name" value="Transcription Factor, Ets-1"/>
    <property type="match status" value="1"/>
</dbReference>
<dbReference type="InterPro" id="IPR002110">
    <property type="entry name" value="Ankyrin_rpt"/>
</dbReference>
<dbReference type="InterPro" id="IPR036770">
    <property type="entry name" value="Ankyrin_rpt-contain_sf"/>
</dbReference>
<dbReference type="InterPro" id="IPR001660">
    <property type="entry name" value="SAM"/>
</dbReference>
<dbReference type="InterPro" id="IPR013761">
    <property type="entry name" value="SAM/pointed_sf"/>
</dbReference>
<dbReference type="InterPro" id="IPR037602">
    <property type="entry name" value="USH1G_SAM"/>
</dbReference>
<dbReference type="PANTHER" id="PTHR24161">
    <property type="entry name" value="ANK_REP_REGION DOMAIN-CONTAINING PROTEIN-RELATED"/>
    <property type="match status" value="1"/>
</dbReference>
<dbReference type="PANTHER" id="PTHR24161:SF24">
    <property type="entry name" value="PRE-MRNA SPLICING REGULATOR USH1G"/>
    <property type="match status" value="1"/>
</dbReference>
<dbReference type="Pfam" id="PF12796">
    <property type="entry name" value="Ank_2"/>
    <property type="match status" value="1"/>
</dbReference>
<dbReference type="Pfam" id="PF00536">
    <property type="entry name" value="SAM_1"/>
    <property type="match status" value="1"/>
</dbReference>
<dbReference type="SMART" id="SM00248">
    <property type="entry name" value="ANK"/>
    <property type="match status" value="3"/>
</dbReference>
<dbReference type="SMART" id="SM00454">
    <property type="entry name" value="SAM"/>
    <property type="match status" value="1"/>
</dbReference>
<dbReference type="SUPFAM" id="SSF48403">
    <property type="entry name" value="Ankyrin repeat"/>
    <property type="match status" value="1"/>
</dbReference>
<dbReference type="SUPFAM" id="SSF47769">
    <property type="entry name" value="SAM/Pointed domain"/>
    <property type="match status" value="1"/>
</dbReference>
<dbReference type="PROSITE" id="PS50297">
    <property type="entry name" value="ANK_REP_REGION"/>
    <property type="match status" value="1"/>
</dbReference>
<dbReference type="PROSITE" id="PS50088">
    <property type="entry name" value="ANK_REPEAT"/>
    <property type="match status" value="2"/>
</dbReference>
<protein>
    <recommendedName>
        <fullName evidence="9">pre-mRNA splicing regulator USH1G</fullName>
    </recommendedName>
    <alternativeName>
        <fullName>Jackson shaker protein</fullName>
    </alternativeName>
    <alternativeName>
        <fullName>Scaffold protein containing ankyrin repeats and SAM domain</fullName>
    </alternativeName>
    <alternativeName>
        <fullName>Usher syndrome type-1G protein homolog</fullName>
    </alternativeName>
</protein>
<proteinExistence type="evidence at protein level"/>
<name>USH1G_MOUSE</name>